<name>MUTL_PELPD</name>
<evidence type="ECO:0000255" key="1">
    <source>
        <dbReference type="HAMAP-Rule" id="MF_00149"/>
    </source>
</evidence>
<evidence type="ECO:0000256" key="2">
    <source>
        <dbReference type="SAM" id="MobiDB-lite"/>
    </source>
</evidence>
<reference key="1">
    <citation type="submission" date="2006-10" db="EMBL/GenBank/DDBJ databases">
        <title>Complete sequence of chromosome of Pelobacter propionicus DSM 2379.</title>
        <authorList>
            <consortium name="US DOE Joint Genome Institute"/>
            <person name="Copeland A."/>
            <person name="Lucas S."/>
            <person name="Lapidus A."/>
            <person name="Barry K."/>
            <person name="Detter J.C."/>
            <person name="Glavina del Rio T."/>
            <person name="Hammon N."/>
            <person name="Israni S."/>
            <person name="Dalin E."/>
            <person name="Tice H."/>
            <person name="Pitluck S."/>
            <person name="Saunders E."/>
            <person name="Brettin T."/>
            <person name="Bruce D."/>
            <person name="Han C."/>
            <person name="Tapia R."/>
            <person name="Schmutz J."/>
            <person name="Larimer F."/>
            <person name="Land M."/>
            <person name="Hauser L."/>
            <person name="Kyrpides N."/>
            <person name="Kim E."/>
            <person name="Lovley D."/>
            <person name="Richardson P."/>
        </authorList>
    </citation>
    <scope>NUCLEOTIDE SEQUENCE [LARGE SCALE GENOMIC DNA]</scope>
    <source>
        <strain>DSM 2379 / NBRC 103807 / OttBd1</strain>
    </source>
</reference>
<proteinExistence type="inferred from homology"/>
<organism>
    <name type="scientific">Pelobacter propionicus (strain DSM 2379 / NBRC 103807 / OttBd1)</name>
    <dbReference type="NCBI Taxonomy" id="338966"/>
    <lineage>
        <taxon>Bacteria</taxon>
        <taxon>Pseudomonadati</taxon>
        <taxon>Thermodesulfobacteriota</taxon>
        <taxon>Desulfuromonadia</taxon>
        <taxon>Desulfuromonadales</taxon>
        <taxon>Desulfuromonadaceae</taxon>
        <taxon>Pelobacter</taxon>
    </lineage>
</organism>
<accession>A1AT89</accession>
<comment type="function">
    <text evidence="1">This protein is involved in the repair of mismatches in DNA. It is required for dam-dependent methyl-directed DNA mismatch repair. May act as a 'molecular matchmaker', a protein that promotes the formation of a stable complex between two or more DNA-binding proteins in an ATP-dependent manner without itself being part of a final effector complex.</text>
</comment>
<comment type="similarity">
    <text evidence="1">Belongs to the DNA mismatch repair MutL/HexB family.</text>
</comment>
<keyword id="KW-0227">DNA damage</keyword>
<keyword id="KW-0234">DNA repair</keyword>
<keyword id="KW-1185">Reference proteome</keyword>
<feature type="chain" id="PRO_1000010055" description="DNA mismatch repair protein MutL">
    <location>
        <begin position="1"/>
        <end position="608"/>
    </location>
</feature>
<feature type="region of interest" description="Disordered" evidence="2">
    <location>
        <begin position="363"/>
        <end position="397"/>
    </location>
</feature>
<feature type="compositionally biased region" description="Basic and acidic residues" evidence="2">
    <location>
        <begin position="369"/>
        <end position="390"/>
    </location>
</feature>
<gene>
    <name evidence="1" type="primary">mutL</name>
    <name type="ordered locus">Ppro_2962</name>
</gene>
<protein>
    <recommendedName>
        <fullName evidence="1">DNA mismatch repair protein MutL</fullName>
    </recommendedName>
</protein>
<sequence length="608" mass="66740">MSQRIAILPEIITNKIAAGEVVERPASVIKELIENSLDAGATDISVEIAAGGRRLIRITDNGHGMSREDALLSLERHATSKIRSDNDLDGIHTLGFRGEALPSVASVSRLRLSSRETDSPEGTEIIVEGGKVRDVRACGMAPGTVISVEQIFFNTPARLKFLRSAETEAGHVGDCLTRMAISRPDVAFSCSSDGRDLLRVQRGDLLRRLSQALGKGTAASLHELHLSRDGIDISGYISSPAACRSTTSAMFTYINGRFIRDKVIQHAIMQAYRGVMDRGRYPVVALFIQLPPAEVDVNVHPTKHEVRFRRQSLVHDTLQSALEELLKRSPWLPRPQTPVQPAAVGAPSISQAYRERVAAAAQASLAMARKPDPPRFHETARPQPDPRHTPGTESVSVREAPTPFLPREPAADPQGYFSALRIIGQFHDEYILCQSGDQLVIIDQHAASERVAFQKLRHQFDTDGVESQRLLFPETLELSFSEADTARRFGNELARIGFELEPFGGNTVIVSAIPRLAIARDASGLIRDLLAELTQLGASSAFLDSRDALLSRIACHSVVRGVHRLEERQIRELLHGMDGTDFAASCPHGRPVSHVITLGELERIFKRT</sequence>
<dbReference type="EMBL" id="CP000482">
    <property type="protein sequence ID" value="ABL00560.1"/>
    <property type="molecule type" value="Genomic_DNA"/>
</dbReference>
<dbReference type="RefSeq" id="WP_011736795.1">
    <property type="nucleotide sequence ID" value="NC_008609.1"/>
</dbReference>
<dbReference type="SMR" id="A1AT89"/>
<dbReference type="STRING" id="338966.Ppro_2962"/>
<dbReference type="KEGG" id="ppd:Ppro_2962"/>
<dbReference type="eggNOG" id="COG0323">
    <property type="taxonomic scope" value="Bacteria"/>
</dbReference>
<dbReference type="HOGENOM" id="CLU_004131_4_2_7"/>
<dbReference type="OrthoDB" id="9763467at2"/>
<dbReference type="Proteomes" id="UP000006732">
    <property type="component" value="Chromosome"/>
</dbReference>
<dbReference type="GO" id="GO:0032300">
    <property type="term" value="C:mismatch repair complex"/>
    <property type="evidence" value="ECO:0007669"/>
    <property type="project" value="InterPro"/>
</dbReference>
<dbReference type="GO" id="GO:0005524">
    <property type="term" value="F:ATP binding"/>
    <property type="evidence" value="ECO:0007669"/>
    <property type="project" value="InterPro"/>
</dbReference>
<dbReference type="GO" id="GO:0016887">
    <property type="term" value="F:ATP hydrolysis activity"/>
    <property type="evidence" value="ECO:0007669"/>
    <property type="project" value="InterPro"/>
</dbReference>
<dbReference type="GO" id="GO:0140664">
    <property type="term" value="F:ATP-dependent DNA damage sensor activity"/>
    <property type="evidence" value="ECO:0007669"/>
    <property type="project" value="InterPro"/>
</dbReference>
<dbReference type="GO" id="GO:0030983">
    <property type="term" value="F:mismatched DNA binding"/>
    <property type="evidence" value="ECO:0007669"/>
    <property type="project" value="InterPro"/>
</dbReference>
<dbReference type="GO" id="GO:0006298">
    <property type="term" value="P:mismatch repair"/>
    <property type="evidence" value="ECO:0007669"/>
    <property type="project" value="UniProtKB-UniRule"/>
</dbReference>
<dbReference type="CDD" id="cd16926">
    <property type="entry name" value="HATPase_MutL-MLH-PMS-like"/>
    <property type="match status" value="1"/>
</dbReference>
<dbReference type="CDD" id="cd00782">
    <property type="entry name" value="MutL_Trans"/>
    <property type="match status" value="1"/>
</dbReference>
<dbReference type="FunFam" id="3.30.565.10:FF:000003">
    <property type="entry name" value="DNA mismatch repair endonuclease MutL"/>
    <property type="match status" value="1"/>
</dbReference>
<dbReference type="Gene3D" id="3.30.230.10">
    <property type="match status" value="1"/>
</dbReference>
<dbReference type="Gene3D" id="3.30.565.10">
    <property type="entry name" value="Histidine kinase-like ATPase, C-terminal domain"/>
    <property type="match status" value="1"/>
</dbReference>
<dbReference type="Gene3D" id="3.30.1540.20">
    <property type="entry name" value="MutL, C-terminal domain, dimerisation subdomain"/>
    <property type="match status" value="1"/>
</dbReference>
<dbReference type="Gene3D" id="3.30.1370.100">
    <property type="entry name" value="MutL, C-terminal domain, regulatory subdomain"/>
    <property type="match status" value="1"/>
</dbReference>
<dbReference type="HAMAP" id="MF_00149">
    <property type="entry name" value="DNA_mis_repair"/>
    <property type="match status" value="1"/>
</dbReference>
<dbReference type="InterPro" id="IPR014762">
    <property type="entry name" value="DNA_mismatch_repair_CS"/>
</dbReference>
<dbReference type="InterPro" id="IPR020667">
    <property type="entry name" value="DNA_mismatch_repair_MutL"/>
</dbReference>
<dbReference type="InterPro" id="IPR013507">
    <property type="entry name" value="DNA_mismatch_S5_2-like"/>
</dbReference>
<dbReference type="InterPro" id="IPR036890">
    <property type="entry name" value="HATPase_C_sf"/>
</dbReference>
<dbReference type="InterPro" id="IPR002099">
    <property type="entry name" value="MutL/Mlh/PMS"/>
</dbReference>
<dbReference type="InterPro" id="IPR038973">
    <property type="entry name" value="MutL/Mlh/Pms-like"/>
</dbReference>
<dbReference type="InterPro" id="IPR014790">
    <property type="entry name" value="MutL_C"/>
</dbReference>
<dbReference type="InterPro" id="IPR042120">
    <property type="entry name" value="MutL_C_dimsub"/>
</dbReference>
<dbReference type="InterPro" id="IPR042121">
    <property type="entry name" value="MutL_C_regsub"/>
</dbReference>
<dbReference type="InterPro" id="IPR037198">
    <property type="entry name" value="MutL_C_sf"/>
</dbReference>
<dbReference type="InterPro" id="IPR020568">
    <property type="entry name" value="Ribosomal_Su5_D2-typ_SF"/>
</dbReference>
<dbReference type="InterPro" id="IPR014721">
    <property type="entry name" value="Ribsml_uS5_D2-typ_fold_subgr"/>
</dbReference>
<dbReference type="NCBIfam" id="TIGR00585">
    <property type="entry name" value="mutl"/>
    <property type="match status" value="1"/>
</dbReference>
<dbReference type="PANTHER" id="PTHR10073">
    <property type="entry name" value="DNA MISMATCH REPAIR PROTEIN MLH, PMS, MUTL"/>
    <property type="match status" value="1"/>
</dbReference>
<dbReference type="PANTHER" id="PTHR10073:SF12">
    <property type="entry name" value="DNA MISMATCH REPAIR PROTEIN MLH1"/>
    <property type="match status" value="1"/>
</dbReference>
<dbReference type="Pfam" id="PF01119">
    <property type="entry name" value="DNA_mis_repair"/>
    <property type="match status" value="1"/>
</dbReference>
<dbReference type="Pfam" id="PF13589">
    <property type="entry name" value="HATPase_c_3"/>
    <property type="match status" value="1"/>
</dbReference>
<dbReference type="Pfam" id="PF08676">
    <property type="entry name" value="MutL_C"/>
    <property type="match status" value="1"/>
</dbReference>
<dbReference type="SMART" id="SM01340">
    <property type="entry name" value="DNA_mis_repair"/>
    <property type="match status" value="1"/>
</dbReference>
<dbReference type="SMART" id="SM00853">
    <property type="entry name" value="MutL_C"/>
    <property type="match status" value="1"/>
</dbReference>
<dbReference type="SUPFAM" id="SSF55874">
    <property type="entry name" value="ATPase domain of HSP90 chaperone/DNA topoisomerase II/histidine kinase"/>
    <property type="match status" value="1"/>
</dbReference>
<dbReference type="SUPFAM" id="SSF118116">
    <property type="entry name" value="DNA mismatch repair protein MutL"/>
    <property type="match status" value="1"/>
</dbReference>
<dbReference type="SUPFAM" id="SSF54211">
    <property type="entry name" value="Ribosomal protein S5 domain 2-like"/>
    <property type="match status" value="1"/>
</dbReference>
<dbReference type="PROSITE" id="PS00058">
    <property type="entry name" value="DNA_MISMATCH_REPAIR_1"/>
    <property type="match status" value="1"/>
</dbReference>